<organism>
    <name type="scientific">Aspergillus fumigatus (strain ATCC MYA-4609 / CBS 101355 / FGSC A1100 / Af293)</name>
    <name type="common">Neosartorya fumigata</name>
    <dbReference type="NCBI Taxonomy" id="330879"/>
    <lineage>
        <taxon>Eukaryota</taxon>
        <taxon>Fungi</taxon>
        <taxon>Dikarya</taxon>
        <taxon>Ascomycota</taxon>
        <taxon>Pezizomycotina</taxon>
        <taxon>Eurotiomycetes</taxon>
        <taxon>Eurotiomycetidae</taxon>
        <taxon>Eurotiales</taxon>
        <taxon>Aspergillaceae</taxon>
        <taxon>Aspergillus</taxon>
        <taxon>Aspergillus subgen. Fumigati</taxon>
    </lineage>
</organism>
<keyword id="KW-0961">Cell wall biogenesis/degradation</keyword>
<keyword id="KW-0256">Endoplasmic reticulum</keyword>
<keyword id="KW-0472">Membrane</keyword>
<keyword id="KW-0653">Protein transport</keyword>
<keyword id="KW-1185">Reference proteome</keyword>
<keyword id="KW-0812">Transmembrane</keyword>
<keyword id="KW-1133">Transmembrane helix</keyword>
<keyword id="KW-0813">Transport</keyword>
<sequence length="331" mass="36842">MGFGQFDSICQKAALPLCSLVGPSSPISGSTGIIPNCYARNIELANTIIFEGAASFVHIIALGMTVIMILHVRSKFTAVGRKEIITFFYIYMALTICSLVIDAGVVPPRSGPFPYFVAVQNGLSSALCTCLLINGFVGFQLYEDGTFLSVWLIRLTSAVMFVVSFLISLLTFKSWGGMSPTNTIALFVVLYILNAISIAIYLVMQLLLVMNTLEDRWPLGHIAFGVIVFICGQVLLYGFSDTICDNVQHYLDGLFFATFCNLLAVMMVYKFWDYITKEDLEFSVGIKPNTWEVKELLPEEDRRTTVYQDSHSEYAGSMYHHRASTYGGHNY</sequence>
<proteinExistence type="inferred from homology"/>
<dbReference type="EMBL" id="BX649605">
    <property type="protein sequence ID" value="CAE47929.1"/>
    <property type="molecule type" value="Genomic_DNA"/>
</dbReference>
<dbReference type="EMBL" id="AAHF01000004">
    <property type="protein sequence ID" value="EAL90533.1"/>
    <property type="molecule type" value="Genomic_DNA"/>
</dbReference>
<dbReference type="RefSeq" id="XP_752571.1">
    <property type="nucleotide sequence ID" value="XM_747478.1"/>
</dbReference>
<dbReference type="FunCoup" id="Q6MYT0">
    <property type="interactions" value="53"/>
</dbReference>
<dbReference type="STRING" id="330879.Q6MYT0"/>
<dbReference type="EnsemblFungi" id="EAL90533">
    <property type="protein sequence ID" value="EAL90533"/>
    <property type="gene ID" value="AFUA_1G12040"/>
</dbReference>
<dbReference type="GeneID" id="3510651"/>
<dbReference type="KEGG" id="afm:AFUA_1G12040"/>
<dbReference type="VEuPathDB" id="FungiDB:Afu1g12040"/>
<dbReference type="eggNOG" id="ENOG502QRVH">
    <property type="taxonomic scope" value="Eukaryota"/>
</dbReference>
<dbReference type="HOGENOM" id="CLU_050424_1_1_1"/>
<dbReference type="InParanoid" id="Q6MYT0"/>
<dbReference type="OMA" id="TVWEVKD"/>
<dbReference type="OrthoDB" id="2189463at2759"/>
<dbReference type="Proteomes" id="UP000002530">
    <property type="component" value="Chromosome 1"/>
</dbReference>
<dbReference type="GO" id="GO:0005789">
    <property type="term" value="C:endoplasmic reticulum membrane"/>
    <property type="evidence" value="ECO:0000318"/>
    <property type="project" value="GO_Central"/>
</dbReference>
<dbReference type="GO" id="GO:0051082">
    <property type="term" value="F:unfolded protein binding"/>
    <property type="evidence" value="ECO:0000318"/>
    <property type="project" value="GO_Central"/>
</dbReference>
<dbReference type="GO" id="GO:0071555">
    <property type="term" value="P:cell wall organization"/>
    <property type="evidence" value="ECO:0007669"/>
    <property type="project" value="UniProtKB-KW"/>
</dbReference>
<dbReference type="GO" id="GO:0006031">
    <property type="term" value="P:chitin biosynthetic process"/>
    <property type="evidence" value="ECO:0000318"/>
    <property type="project" value="GO_Central"/>
</dbReference>
<dbReference type="GO" id="GO:0006457">
    <property type="term" value="P:protein folding"/>
    <property type="evidence" value="ECO:0000318"/>
    <property type="project" value="GO_Central"/>
</dbReference>
<dbReference type="GO" id="GO:0015031">
    <property type="term" value="P:protein transport"/>
    <property type="evidence" value="ECO:0007669"/>
    <property type="project" value="UniProtKB-KW"/>
</dbReference>
<dbReference type="InterPro" id="IPR022057">
    <property type="entry name" value="Chs7"/>
</dbReference>
<dbReference type="PANTHER" id="PTHR35329">
    <property type="entry name" value="CHITIN SYNTHASE EXPORT CHAPERONE"/>
    <property type="match status" value="1"/>
</dbReference>
<dbReference type="PANTHER" id="PTHR35329:SF2">
    <property type="entry name" value="CHITIN SYNTHASE EXPORT CHAPERONE"/>
    <property type="match status" value="1"/>
</dbReference>
<dbReference type="Pfam" id="PF12271">
    <property type="entry name" value="Chs7"/>
    <property type="match status" value="1"/>
</dbReference>
<name>CHS7_ASPFU</name>
<gene>
    <name type="primary">chs7</name>
    <name type="ORF">AfA28D1.075c</name>
    <name type="ORF">AFUA_1G12040</name>
</gene>
<comment type="function">
    <text evidence="1">Chaperone required for the export of the chitin synthase chs3 from the endoplasmic reticulum.</text>
</comment>
<comment type="subunit">
    <text evidence="1">Interacts with chs3.</text>
</comment>
<comment type="subcellular location">
    <subcellularLocation>
        <location evidence="1">Endoplasmic reticulum membrane</location>
        <topology evidence="1">Multi-pass membrane protein</topology>
    </subcellularLocation>
</comment>
<comment type="similarity">
    <text evidence="3">Belongs to the CHS7 family.</text>
</comment>
<evidence type="ECO:0000250" key="1"/>
<evidence type="ECO:0000255" key="2"/>
<evidence type="ECO:0000305" key="3"/>
<protein>
    <recommendedName>
        <fullName>Chitin synthase export chaperone</fullName>
    </recommendedName>
</protein>
<accession>Q6MYT0</accession>
<accession>Q4WSP9</accession>
<feature type="chain" id="PRO_0000280569" description="Chitin synthase export chaperone">
    <location>
        <begin position="1"/>
        <end position="331"/>
    </location>
</feature>
<feature type="transmembrane region" description="Helical" evidence="2">
    <location>
        <begin position="48"/>
        <end position="68"/>
    </location>
</feature>
<feature type="transmembrane region" description="Helical" evidence="2">
    <location>
        <begin position="84"/>
        <end position="104"/>
    </location>
</feature>
<feature type="transmembrane region" description="Helical" evidence="2">
    <location>
        <begin position="122"/>
        <end position="142"/>
    </location>
</feature>
<feature type="transmembrane region" description="Helical" evidence="2">
    <location>
        <begin position="147"/>
        <end position="167"/>
    </location>
</feature>
<feature type="transmembrane region" description="Helical" evidence="2">
    <location>
        <begin position="184"/>
        <end position="204"/>
    </location>
</feature>
<feature type="transmembrane region" description="Helical" evidence="2">
    <location>
        <begin position="219"/>
        <end position="239"/>
    </location>
</feature>
<feature type="transmembrane region" description="Helical" evidence="2">
    <location>
        <begin position="249"/>
        <end position="269"/>
    </location>
</feature>
<reference key="1">
    <citation type="journal article" date="2004" name="Fungal Genet. Biol.">
        <title>Insight into the genome of Aspergillus fumigatus: analysis of a 922 kb region encompassing the nitrate assimilation gene cluster.</title>
        <authorList>
            <person name="Pain A."/>
            <person name="Woodward J.R."/>
            <person name="Quail M.A."/>
            <person name="Anderson M.J."/>
            <person name="Clark R."/>
            <person name="Collins M."/>
            <person name="Fosker N."/>
            <person name="Fraser A."/>
            <person name="Harris D.E."/>
            <person name="Larke N."/>
            <person name="Murphy L.D."/>
            <person name="Humphray S."/>
            <person name="O'Neil S."/>
            <person name="Pertea M."/>
            <person name="Price C."/>
            <person name="Rabbinowitsch E."/>
            <person name="Rajandream M.A."/>
            <person name="Salzberg S.L."/>
            <person name="Saunders D."/>
            <person name="Seeger K."/>
            <person name="Sharp S."/>
            <person name="Warren T."/>
            <person name="Denning D.W."/>
            <person name="Barrell B.G."/>
            <person name="Hall N."/>
        </authorList>
    </citation>
    <scope>NUCLEOTIDE SEQUENCE [LARGE SCALE GENOMIC DNA]</scope>
</reference>
<reference key="2">
    <citation type="journal article" date="2005" name="Nature">
        <title>Genomic sequence of the pathogenic and allergenic filamentous fungus Aspergillus fumigatus.</title>
        <authorList>
            <person name="Nierman W.C."/>
            <person name="Pain A."/>
            <person name="Anderson M.J."/>
            <person name="Wortman J.R."/>
            <person name="Kim H.S."/>
            <person name="Arroyo J."/>
            <person name="Berriman M."/>
            <person name="Abe K."/>
            <person name="Archer D.B."/>
            <person name="Bermejo C."/>
            <person name="Bennett J.W."/>
            <person name="Bowyer P."/>
            <person name="Chen D."/>
            <person name="Collins M."/>
            <person name="Coulsen R."/>
            <person name="Davies R."/>
            <person name="Dyer P.S."/>
            <person name="Farman M.L."/>
            <person name="Fedorova N."/>
            <person name="Fedorova N.D."/>
            <person name="Feldblyum T.V."/>
            <person name="Fischer R."/>
            <person name="Fosker N."/>
            <person name="Fraser A."/>
            <person name="Garcia J.L."/>
            <person name="Garcia M.J."/>
            <person name="Goble A."/>
            <person name="Goldman G.H."/>
            <person name="Gomi K."/>
            <person name="Griffith-Jones S."/>
            <person name="Gwilliam R."/>
            <person name="Haas B.J."/>
            <person name="Haas H."/>
            <person name="Harris D.E."/>
            <person name="Horiuchi H."/>
            <person name="Huang J."/>
            <person name="Humphray S."/>
            <person name="Jimenez J."/>
            <person name="Keller N."/>
            <person name="Khouri H."/>
            <person name="Kitamoto K."/>
            <person name="Kobayashi T."/>
            <person name="Konzack S."/>
            <person name="Kulkarni R."/>
            <person name="Kumagai T."/>
            <person name="Lafton A."/>
            <person name="Latge J.-P."/>
            <person name="Li W."/>
            <person name="Lord A."/>
            <person name="Lu C."/>
            <person name="Majoros W.H."/>
            <person name="May G.S."/>
            <person name="Miller B.L."/>
            <person name="Mohamoud Y."/>
            <person name="Molina M."/>
            <person name="Monod M."/>
            <person name="Mouyna I."/>
            <person name="Mulligan S."/>
            <person name="Murphy L.D."/>
            <person name="O'Neil S."/>
            <person name="Paulsen I."/>
            <person name="Penalva M.A."/>
            <person name="Pertea M."/>
            <person name="Price C."/>
            <person name="Pritchard B.L."/>
            <person name="Quail M.A."/>
            <person name="Rabbinowitsch E."/>
            <person name="Rawlins N."/>
            <person name="Rajandream M.A."/>
            <person name="Reichard U."/>
            <person name="Renauld H."/>
            <person name="Robson G.D."/>
            <person name="Rodriguez de Cordoba S."/>
            <person name="Rodriguez-Pena J.M."/>
            <person name="Ronning C.M."/>
            <person name="Rutter S."/>
            <person name="Salzberg S.L."/>
            <person name="Sanchez M."/>
            <person name="Sanchez-Ferrero J.C."/>
            <person name="Saunders D."/>
            <person name="Seeger K."/>
            <person name="Squares R."/>
            <person name="Squares S."/>
            <person name="Takeuchi M."/>
            <person name="Tekaia F."/>
            <person name="Turner G."/>
            <person name="Vazquez de Aldana C.R."/>
            <person name="Weidman J."/>
            <person name="White O."/>
            <person name="Woodward J.R."/>
            <person name="Yu J.-H."/>
            <person name="Fraser C.M."/>
            <person name="Galagan J.E."/>
            <person name="Asai K."/>
            <person name="Machida M."/>
            <person name="Hall N."/>
            <person name="Barrell B.G."/>
            <person name="Denning D.W."/>
        </authorList>
    </citation>
    <scope>NUCLEOTIDE SEQUENCE [LARGE SCALE GENOMIC DNA]</scope>
    <source>
        <strain>ATCC MYA-4609 / CBS 101355 / FGSC A1100 / Af293</strain>
    </source>
</reference>